<accession>Q6HEP1</accession>
<comment type="similarity">
    <text evidence="1">Belongs to the bacterial ribosomal protein bL32 family.</text>
</comment>
<comment type="sequence caution" evidence="2">
    <conflict type="erroneous initiation">
        <sequence resource="EMBL-CDS" id="AAT60653"/>
    </conflict>
</comment>
<protein>
    <recommendedName>
        <fullName evidence="1">Large ribosomal subunit protein bL32</fullName>
    </recommendedName>
    <alternativeName>
        <fullName evidence="2">50S ribosomal protein L32</fullName>
    </alternativeName>
</protein>
<gene>
    <name evidence="1" type="primary">rpmF</name>
    <name type="ordered locus">BT9727_3665</name>
</gene>
<evidence type="ECO:0000255" key="1">
    <source>
        <dbReference type="HAMAP-Rule" id="MF_00340"/>
    </source>
</evidence>
<evidence type="ECO:0000305" key="2"/>
<sequence length="57" mass="6394">MAVPFRRTSKTVKRKRRTHFKLSVPGMVECPSCGEAKLAHRVCKACGTYKGKEVISK</sequence>
<reference key="1">
    <citation type="journal article" date="2006" name="J. Bacteriol.">
        <title>Pathogenomic sequence analysis of Bacillus cereus and Bacillus thuringiensis isolates closely related to Bacillus anthracis.</title>
        <authorList>
            <person name="Han C.S."/>
            <person name="Xie G."/>
            <person name="Challacombe J.F."/>
            <person name="Altherr M.R."/>
            <person name="Bhotika S.S."/>
            <person name="Bruce D."/>
            <person name="Campbell C.S."/>
            <person name="Campbell M.L."/>
            <person name="Chen J."/>
            <person name="Chertkov O."/>
            <person name="Cleland C."/>
            <person name="Dimitrijevic M."/>
            <person name="Doggett N.A."/>
            <person name="Fawcett J.J."/>
            <person name="Glavina T."/>
            <person name="Goodwin L.A."/>
            <person name="Hill K.K."/>
            <person name="Hitchcock P."/>
            <person name="Jackson P.J."/>
            <person name="Keim P."/>
            <person name="Kewalramani A.R."/>
            <person name="Longmire J."/>
            <person name="Lucas S."/>
            <person name="Malfatti S."/>
            <person name="McMurry K."/>
            <person name="Meincke L.J."/>
            <person name="Misra M."/>
            <person name="Moseman B.L."/>
            <person name="Mundt M."/>
            <person name="Munk A.C."/>
            <person name="Okinaka R.T."/>
            <person name="Parson-Quintana B."/>
            <person name="Reilly L.P."/>
            <person name="Richardson P."/>
            <person name="Robinson D.L."/>
            <person name="Rubin E."/>
            <person name="Saunders E."/>
            <person name="Tapia R."/>
            <person name="Tesmer J.G."/>
            <person name="Thayer N."/>
            <person name="Thompson L.S."/>
            <person name="Tice H."/>
            <person name="Ticknor L.O."/>
            <person name="Wills P.L."/>
            <person name="Brettin T.S."/>
            <person name="Gilna P."/>
        </authorList>
    </citation>
    <scope>NUCLEOTIDE SEQUENCE [LARGE SCALE GENOMIC DNA]</scope>
    <source>
        <strain>97-27</strain>
    </source>
</reference>
<dbReference type="EMBL" id="AE017355">
    <property type="protein sequence ID" value="AAT60653.1"/>
    <property type="status" value="ALT_INIT"/>
    <property type="molecule type" value="Genomic_DNA"/>
</dbReference>
<dbReference type="RefSeq" id="WP_001984764.1">
    <property type="nucleotide sequence ID" value="NC_005957.1"/>
</dbReference>
<dbReference type="RefSeq" id="YP_037985.2">
    <property type="nucleotide sequence ID" value="NC_005957.1"/>
</dbReference>
<dbReference type="SMR" id="Q6HEP1"/>
<dbReference type="GeneID" id="93007188"/>
<dbReference type="KEGG" id="btk:BT9727_3665"/>
<dbReference type="PATRIC" id="fig|281309.8.peg.3904"/>
<dbReference type="HOGENOM" id="CLU_129084_1_2_9"/>
<dbReference type="PRO" id="PR:Q6HEP1"/>
<dbReference type="Proteomes" id="UP000001301">
    <property type="component" value="Chromosome"/>
</dbReference>
<dbReference type="GO" id="GO:0015934">
    <property type="term" value="C:large ribosomal subunit"/>
    <property type="evidence" value="ECO:0007669"/>
    <property type="project" value="InterPro"/>
</dbReference>
<dbReference type="GO" id="GO:0003735">
    <property type="term" value="F:structural constituent of ribosome"/>
    <property type="evidence" value="ECO:0007669"/>
    <property type="project" value="InterPro"/>
</dbReference>
<dbReference type="GO" id="GO:0006412">
    <property type="term" value="P:translation"/>
    <property type="evidence" value="ECO:0007669"/>
    <property type="project" value="UniProtKB-UniRule"/>
</dbReference>
<dbReference type="HAMAP" id="MF_00340">
    <property type="entry name" value="Ribosomal_bL32"/>
    <property type="match status" value="1"/>
</dbReference>
<dbReference type="InterPro" id="IPR002677">
    <property type="entry name" value="Ribosomal_bL32"/>
</dbReference>
<dbReference type="InterPro" id="IPR044957">
    <property type="entry name" value="Ribosomal_bL32_bact"/>
</dbReference>
<dbReference type="InterPro" id="IPR011332">
    <property type="entry name" value="Ribosomal_zn-bd"/>
</dbReference>
<dbReference type="NCBIfam" id="TIGR01031">
    <property type="entry name" value="rpmF_bact"/>
    <property type="match status" value="1"/>
</dbReference>
<dbReference type="PANTHER" id="PTHR35534">
    <property type="entry name" value="50S RIBOSOMAL PROTEIN L32"/>
    <property type="match status" value="1"/>
</dbReference>
<dbReference type="PANTHER" id="PTHR35534:SF2">
    <property type="entry name" value="LARGE RIBOSOMAL SUBUNIT PROTEIN BL32"/>
    <property type="match status" value="1"/>
</dbReference>
<dbReference type="Pfam" id="PF01783">
    <property type="entry name" value="Ribosomal_L32p"/>
    <property type="match status" value="1"/>
</dbReference>
<dbReference type="SUPFAM" id="SSF57829">
    <property type="entry name" value="Zn-binding ribosomal proteins"/>
    <property type="match status" value="1"/>
</dbReference>
<keyword id="KW-0687">Ribonucleoprotein</keyword>
<keyword id="KW-0689">Ribosomal protein</keyword>
<proteinExistence type="inferred from homology"/>
<name>RL32_BACHK</name>
<organism>
    <name type="scientific">Bacillus thuringiensis subsp. konkukian (strain 97-27)</name>
    <dbReference type="NCBI Taxonomy" id="281309"/>
    <lineage>
        <taxon>Bacteria</taxon>
        <taxon>Bacillati</taxon>
        <taxon>Bacillota</taxon>
        <taxon>Bacilli</taxon>
        <taxon>Bacillales</taxon>
        <taxon>Bacillaceae</taxon>
        <taxon>Bacillus</taxon>
        <taxon>Bacillus cereus group</taxon>
    </lineage>
</organism>
<feature type="chain" id="PRO_0000172303" description="Large ribosomal subunit protein bL32">
    <location>
        <begin position="1"/>
        <end position="57"/>
    </location>
</feature>